<keyword id="KW-0067">ATP-binding</keyword>
<keyword id="KW-0143">Chaperone</keyword>
<keyword id="KW-0547">Nucleotide-binding</keyword>
<keyword id="KW-0597">Phosphoprotein</keyword>
<keyword id="KW-1185">Reference proteome</keyword>
<keyword id="KW-0346">Stress response</keyword>
<reference key="1">
    <citation type="submission" date="2005-10" db="EMBL/GenBank/DDBJ databases">
        <title>Complete sequence of Pelobacter carbinolicus DSM 2380.</title>
        <authorList>
            <person name="Copeland A."/>
            <person name="Lucas S."/>
            <person name="Lapidus A."/>
            <person name="Barry K."/>
            <person name="Detter J.C."/>
            <person name="Glavina T."/>
            <person name="Hammon N."/>
            <person name="Israni S."/>
            <person name="Pitluck S."/>
            <person name="Chertkov O."/>
            <person name="Schmutz J."/>
            <person name="Larimer F."/>
            <person name="Land M."/>
            <person name="Kyrpides N."/>
            <person name="Ivanova N."/>
            <person name="Richardson P."/>
        </authorList>
    </citation>
    <scope>NUCLEOTIDE SEQUENCE [LARGE SCALE GENOMIC DNA]</scope>
    <source>
        <strain>DSM 2380 / NBRC 103641 / GraBd1</strain>
    </source>
</reference>
<feature type="chain" id="PRO_0000225991" description="Chaperone protein DnaK">
    <location>
        <begin position="1"/>
        <end position="634"/>
    </location>
</feature>
<feature type="region of interest" description="Disordered" evidence="2">
    <location>
        <begin position="599"/>
        <end position="634"/>
    </location>
</feature>
<feature type="compositionally biased region" description="Low complexity" evidence="2">
    <location>
        <begin position="602"/>
        <end position="619"/>
    </location>
</feature>
<feature type="compositionally biased region" description="Acidic residues" evidence="2">
    <location>
        <begin position="620"/>
        <end position="634"/>
    </location>
</feature>
<feature type="modified residue" description="Phosphothreonine; by autocatalysis" evidence="1">
    <location>
        <position position="198"/>
    </location>
</feature>
<organism>
    <name type="scientific">Syntrophotalea carbinolica (strain DSM 2380 / NBRC 103641 / GraBd1)</name>
    <name type="common">Pelobacter carbinolicus</name>
    <dbReference type="NCBI Taxonomy" id="338963"/>
    <lineage>
        <taxon>Bacteria</taxon>
        <taxon>Pseudomonadati</taxon>
        <taxon>Thermodesulfobacteriota</taxon>
        <taxon>Desulfuromonadia</taxon>
        <taxon>Desulfuromonadales</taxon>
        <taxon>Syntrophotaleaceae</taxon>
        <taxon>Syntrophotalea</taxon>
    </lineage>
</organism>
<comment type="function">
    <text evidence="1">Acts as a chaperone.</text>
</comment>
<comment type="induction">
    <text evidence="1">By stress conditions e.g. heat shock.</text>
</comment>
<comment type="similarity">
    <text evidence="1">Belongs to the heat shock protein 70 family.</text>
</comment>
<protein>
    <recommendedName>
        <fullName evidence="1">Chaperone protein DnaK</fullName>
    </recommendedName>
    <alternativeName>
        <fullName evidence="1">HSP70</fullName>
    </alternativeName>
    <alternativeName>
        <fullName evidence="1">Heat shock 70 kDa protein</fullName>
    </alternativeName>
    <alternativeName>
        <fullName evidence="1">Heat shock protein 70</fullName>
    </alternativeName>
</protein>
<proteinExistence type="inferred from homology"/>
<evidence type="ECO:0000255" key="1">
    <source>
        <dbReference type="HAMAP-Rule" id="MF_00332"/>
    </source>
</evidence>
<evidence type="ECO:0000256" key="2">
    <source>
        <dbReference type="SAM" id="MobiDB-lite"/>
    </source>
</evidence>
<sequence length="634" mass="68441">MGKVIGIDLGTTNSCVAVMEGGEPVVIANAEGSRTTPSMVAFTENGERLVGQQAKRQAVTNPENTLFAIKRLIGRKFDSDAVRRDIQISPFEIVKADNGDAWVDVRDKKYSPPEISAMILQKMKQTAEDYLGEKVTDAVITVPAYFNDSQRQATKDAGKISGLNVLRIINEPTAASLAYGLDKKSEEKIAVFDLGGGTFDISILELGDGVFEVKSTNGDTFLGGEDFDQHIMDYVADEFKKEQGIDLRNDKMALQRLKEACEKAKCELSTSMETDINLPFITADQSGPKHLNLRLTRSKLESICSSLLAKLVEPCRMALKDAGLSASDVDEVLLVGGMTRMPAVQAKVQEIFGKTPNKGVNPDEVVAIGAAIQGGVLKGEVKDVLLLDVTPLSLGIETLGSIMTKLIEKNTTIPCKKSQIFSTAADNQPAVSVHVLQGEREMAGDNKTIGRFELVGIPPAPRGVPQVEVTFDIDANGILHVSAKDLGTGKEQSIRITASSGLSDEEIDKMVKDAEAHSSEDKKKREIIEARNQADGLAYSTEKSLKEHGDKIDEETRNNIQTALDALKAAMEGDDPEDIRQKSEALATASHKLAEAVYKQTQEGAEAASEAGEQSAGDEGVVDAEFEEVDEQNK</sequence>
<gene>
    <name evidence="1" type="primary">dnaK</name>
    <name type="ordered locus">Pcar_0107</name>
</gene>
<dbReference type="EMBL" id="CP000142">
    <property type="protein sequence ID" value="ABA87370.1"/>
    <property type="molecule type" value="Genomic_DNA"/>
</dbReference>
<dbReference type="RefSeq" id="WP_011339759.1">
    <property type="nucleotide sequence ID" value="NC_007498.2"/>
</dbReference>
<dbReference type="SMR" id="Q3A8C2"/>
<dbReference type="STRING" id="338963.Pcar_0107"/>
<dbReference type="KEGG" id="pca:Pcar_0107"/>
<dbReference type="eggNOG" id="COG0443">
    <property type="taxonomic scope" value="Bacteria"/>
</dbReference>
<dbReference type="HOGENOM" id="CLU_005965_2_1_7"/>
<dbReference type="OrthoDB" id="9766019at2"/>
<dbReference type="Proteomes" id="UP000002534">
    <property type="component" value="Chromosome"/>
</dbReference>
<dbReference type="GO" id="GO:0005524">
    <property type="term" value="F:ATP binding"/>
    <property type="evidence" value="ECO:0007669"/>
    <property type="project" value="UniProtKB-UniRule"/>
</dbReference>
<dbReference type="GO" id="GO:0140662">
    <property type="term" value="F:ATP-dependent protein folding chaperone"/>
    <property type="evidence" value="ECO:0007669"/>
    <property type="project" value="InterPro"/>
</dbReference>
<dbReference type="GO" id="GO:0051082">
    <property type="term" value="F:unfolded protein binding"/>
    <property type="evidence" value="ECO:0007669"/>
    <property type="project" value="InterPro"/>
</dbReference>
<dbReference type="CDD" id="cd10234">
    <property type="entry name" value="ASKHA_NBD_HSP70_DnaK-like"/>
    <property type="match status" value="1"/>
</dbReference>
<dbReference type="FunFam" id="2.60.34.10:FF:000014">
    <property type="entry name" value="Chaperone protein DnaK HSP70"/>
    <property type="match status" value="1"/>
</dbReference>
<dbReference type="FunFam" id="3.30.420.40:FF:000020">
    <property type="entry name" value="Chaperone protein HscA homolog"/>
    <property type="match status" value="1"/>
</dbReference>
<dbReference type="FunFam" id="1.20.1270.10:FF:000001">
    <property type="entry name" value="Molecular chaperone DnaK"/>
    <property type="match status" value="1"/>
</dbReference>
<dbReference type="FunFam" id="3.30.420.40:FF:000004">
    <property type="entry name" value="Molecular chaperone DnaK"/>
    <property type="match status" value="1"/>
</dbReference>
<dbReference type="FunFam" id="3.90.640.10:FF:000003">
    <property type="entry name" value="Molecular chaperone DnaK"/>
    <property type="match status" value="1"/>
</dbReference>
<dbReference type="Gene3D" id="1.20.1270.10">
    <property type="match status" value="1"/>
</dbReference>
<dbReference type="Gene3D" id="3.30.420.40">
    <property type="match status" value="2"/>
</dbReference>
<dbReference type="Gene3D" id="3.90.640.10">
    <property type="entry name" value="Actin, Chain A, domain 4"/>
    <property type="match status" value="1"/>
</dbReference>
<dbReference type="Gene3D" id="2.60.34.10">
    <property type="entry name" value="Substrate Binding Domain Of DNAk, Chain A, domain 1"/>
    <property type="match status" value="1"/>
</dbReference>
<dbReference type="HAMAP" id="MF_00332">
    <property type="entry name" value="DnaK"/>
    <property type="match status" value="1"/>
</dbReference>
<dbReference type="InterPro" id="IPR043129">
    <property type="entry name" value="ATPase_NBD"/>
</dbReference>
<dbReference type="InterPro" id="IPR012725">
    <property type="entry name" value="Chaperone_DnaK"/>
</dbReference>
<dbReference type="InterPro" id="IPR018181">
    <property type="entry name" value="Heat_shock_70_CS"/>
</dbReference>
<dbReference type="InterPro" id="IPR029048">
    <property type="entry name" value="HSP70_C_sf"/>
</dbReference>
<dbReference type="InterPro" id="IPR029047">
    <property type="entry name" value="HSP70_peptide-bd_sf"/>
</dbReference>
<dbReference type="InterPro" id="IPR013126">
    <property type="entry name" value="Hsp_70_fam"/>
</dbReference>
<dbReference type="NCBIfam" id="NF001413">
    <property type="entry name" value="PRK00290.1"/>
    <property type="match status" value="1"/>
</dbReference>
<dbReference type="NCBIfam" id="NF003520">
    <property type="entry name" value="PRK05183.1"/>
    <property type="match status" value="1"/>
</dbReference>
<dbReference type="NCBIfam" id="TIGR02350">
    <property type="entry name" value="prok_dnaK"/>
    <property type="match status" value="1"/>
</dbReference>
<dbReference type="PANTHER" id="PTHR19375">
    <property type="entry name" value="HEAT SHOCK PROTEIN 70KDA"/>
    <property type="match status" value="1"/>
</dbReference>
<dbReference type="Pfam" id="PF00012">
    <property type="entry name" value="HSP70"/>
    <property type="match status" value="1"/>
</dbReference>
<dbReference type="PRINTS" id="PR00301">
    <property type="entry name" value="HEATSHOCK70"/>
</dbReference>
<dbReference type="SUPFAM" id="SSF53067">
    <property type="entry name" value="Actin-like ATPase domain"/>
    <property type="match status" value="2"/>
</dbReference>
<dbReference type="SUPFAM" id="SSF100934">
    <property type="entry name" value="Heat shock protein 70kD (HSP70), C-terminal subdomain"/>
    <property type="match status" value="1"/>
</dbReference>
<dbReference type="SUPFAM" id="SSF100920">
    <property type="entry name" value="Heat shock protein 70kD (HSP70), peptide-binding domain"/>
    <property type="match status" value="1"/>
</dbReference>
<dbReference type="PROSITE" id="PS00297">
    <property type="entry name" value="HSP70_1"/>
    <property type="match status" value="1"/>
</dbReference>
<dbReference type="PROSITE" id="PS00329">
    <property type="entry name" value="HSP70_2"/>
    <property type="match status" value="1"/>
</dbReference>
<dbReference type="PROSITE" id="PS01036">
    <property type="entry name" value="HSP70_3"/>
    <property type="match status" value="1"/>
</dbReference>
<name>DNAK_SYNC1</name>
<accession>Q3A8C2</accession>